<sequence>MQNNLAYNAYSQNQAGIESPQKLIEMLYEGILRFCARAKVAIRNEDIEQRVYFVKRTTAIFIELINTLDYEKGGEVAHYLSGLYTREIQLLSLANLENNEDRINEVINVTKGLLEAWREVHNNETVAQ</sequence>
<organism>
    <name type="scientific">Campylobacter jejuni subsp. jejuni serotype O:6 (strain 81116 / NCTC 11828)</name>
    <dbReference type="NCBI Taxonomy" id="407148"/>
    <lineage>
        <taxon>Bacteria</taxon>
        <taxon>Pseudomonadati</taxon>
        <taxon>Campylobacterota</taxon>
        <taxon>Epsilonproteobacteria</taxon>
        <taxon>Campylobacterales</taxon>
        <taxon>Campylobacteraceae</taxon>
        <taxon>Campylobacter</taxon>
    </lineage>
</organism>
<keyword id="KW-1005">Bacterial flagellum biogenesis</keyword>
<keyword id="KW-0143">Chaperone</keyword>
<keyword id="KW-0963">Cytoplasm</keyword>
<comment type="function">
    <text evidence="2">Required for flagellar assembly and thus bacterial motility (PubMed:28659885).</text>
</comment>
<comment type="subunit">
    <text evidence="1 2">Interacts with flagellins FlaA, FlaB and FlaC; preferentially binds glycosylated FlaA over non-glycosylated protein (PubMed:28659885). Requires the 10 last residues of FlaA for binding (PubMed:28659885). May form a 3-way complex of flagellin, FliS and FliW simultaneously in which FliS and FliW do not directly interact (By similarity).</text>
</comment>
<comment type="subcellular location">
    <subcellularLocation>
        <location evidence="3">Cytoplasm</location>
        <location evidence="3">Cytosol</location>
    </subcellularLocation>
</comment>
<comment type="disruption phenotype">
    <text evidence="2">Cells are non-motile, flagellar filaments are severely truncated (PubMed:28659885). Strongly reduced levels of secreted flagellins FlaA, FlaB and FlaC (PubMed:28659885).</text>
</comment>
<comment type="similarity">
    <text evidence="3">Belongs to the FliS family.</text>
</comment>
<evidence type="ECO:0000250" key="1">
    <source>
        <dbReference type="UniProtKB" id="P39739"/>
    </source>
</evidence>
<evidence type="ECO:0000269" key="2">
    <source>
    </source>
</evidence>
<evidence type="ECO:0000305" key="3"/>
<name>FLIS_CAMJ8</name>
<feature type="chain" id="PRO_0000442733" description="Flagellar secretion chaperone FliS">
    <location>
        <begin position="1"/>
        <end position="128"/>
    </location>
</feature>
<protein>
    <recommendedName>
        <fullName>Flagellar secretion chaperone FliS</fullName>
    </recommendedName>
</protein>
<reference key="1">
    <citation type="journal article" date="2007" name="J. Bacteriol.">
        <title>The complete genome sequence of Campylobacter jejuni strain 81116 (NCTC11828).</title>
        <authorList>
            <person name="Pearson B.M."/>
            <person name="Gaskin D.J.H."/>
            <person name="Segers R.P.A.M."/>
            <person name="Wells J.M."/>
            <person name="Nuijten P.J.M."/>
            <person name="van Vliet A.H.M."/>
        </authorList>
    </citation>
    <scope>NUCLEOTIDE SEQUENCE [LARGE SCALE GENOMIC DNA]</scope>
    <source>
        <strain>81116 / NCTC 11828</strain>
    </source>
</reference>
<reference key="2">
    <citation type="journal article" date="2017" name="Front. Microbiol.">
        <title>Importance of Campylobacter jejuni FliS and FliW in flagella biogenesis and flagellin secretion.</title>
        <authorList>
            <person name="Radomska K.A."/>
            <person name="Woesten M.M.S.M."/>
            <person name="Ordonez S.R."/>
            <person name="Wagenaar J.A."/>
            <person name="van Putten J.P.M."/>
        </authorList>
    </citation>
    <scope>FUNCTION</scope>
    <scope>INTERACTION WITH FLAGELLINS FLAA; FLAB AND FLAC</scope>
    <scope>SUBUNIT</scope>
    <scope>DISRUPTION PHENOTYPE</scope>
    <source>
        <strain>81116 / NCTC 11828</strain>
    </source>
</reference>
<accession>P0DPD3</accession>
<dbReference type="EMBL" id="CP000814">
    <property type="protein sequence ID" value="ABV52109.1"/>
    <property type="molecule type" value="Genomic_DNA"/>
</dbReference>
<dbReference type="RefSeq" id="WP_002854990.1">
    <property type="nucleotide sequence ID" value="NC_009839.1"/>
</dbReference>
<dbReference type="SMR" id="P0DPD3"/>
<dbReference type="KEGG" id="cju:C8J_0510"/>
<dbReference type="HOGENOM" id="CLU_080373_3_1_7"/>
<dbReference type="GO" id="GO:0005829">
    <property type="term" value="C:cytosol"/>
    <property type="evidence" value="ECO:0007669"/>
    <property type="project" value="UniProtKB-SubCell"/>
</dbReference>
<dbReference type="GO" id="GO:0044780">
    <property type="term" value="P:bacterial-type flagellum assembly"/>
    <property type="evidence" value="ECO:0007669"/>
    <property type="project" value="InterPro"/>
</dbReference>
<dbReference type="GO" id="GO:0071973">
    <property type="term" value="P:bacterial-type flagellum-dependent cell motility"/>
    <property type="evidence" value="ECO:0007669"/>
    <property type="project" value="TreeGrafter"/>
</dbReference>
<dbReference type="CDD" id="cd16098">
    <property type="entry name" value="FliS"/>
    <property type="match status" value="1"/>
</dbReference>
<dbReference type="Gene3D" id="1.20.120.340">
    <property type="entry name" value="Flagellar protein FliS"/>
    <property type="match status" value="1"/>
</dbReference>
<dbReference type="InterPro" id="IPR003713">
    <property type="entry name" value="FliS"/>
</dbReference>
<dbReference type="InterPro" id="IPR036584">
    <property type="entry name" value="FliS_sf"/>
</dbReference>
<dbReference type="NCBIfam" id="TIGR00208">
    <property type="entry name" value="fliS"/>
    <property type="match status" value="1"/>
</dbReference>
<dbReference type="PANTHER" id="PTHR34773">
    <property type="entry name" value="FLAGELLAR SECRETION CHAPERONE FLIS"/>
    <property type="match status" value="1"/>
</dbReference>
<dbReference type="PANTHER" id="PTHR34773:SF1">
    <property type="entry name" value="FLAGELLAR SECRETION CHAPERONE FLIS"/>
    <property type="match status" value="1"/>
</dbReference>
<dbReference type="Pfam" id="PF02561">
    <property type="entry name" value="FliS"/>
    <property type="match status" value="1"/>
</dbReference>
<dbReference type="PIRSF" id="PIRSF039090">
    <property type="entry name" value="Flis"/>
    <property type="match status" value="1"/>
</dbReference>
<dbReference type="SUPFAM" id="SSF101116">
    <property type="entry name" value="Flagellar export chaperone FliS"/>
    <property type="match status" value="1"/>
</dbReference>
<gene>
    <name type="primary">fliS</name>
    <name type="ordered locus">C8J_0510</name>
</gene>
<proteinExistence type="evidence at protein level"/>